<keyword id="KW-0067">ATP-binding</keyword>
<keyword id="KW-0418">Kinase</keyword>
<keyword id="KW-0545">Nucleotide biosynthesis</keyword>
<keyword id="KW-0547">Nucleotide-binding</keyword>
<keyword id="KW-0808">Transferase</keyword>
<protein>
    <recommendedName>
        <fullName evidence="1">Thymidylate kinase</fullName>
        <ecNumber evidence="1">2.7.4.9</ecNumber>
    </recommendedName>
    <alternativeName>
        <fullName evidence="1">dTMP kinase</fullName>
    </alternativeName>
</protein>
<comment type="function">
    <text evidence="1">Phosphorylation of dTMP to form dTDP in both de novo and salvage pathways of dTTP synthesis.</text>
</comment>
<comment type="catalytic activity">
    <reaction evidence="1">
        <text>dTMP + ATP = dTDP + ADP</text>
        <dbReference type="Rhea" id="RHEA:13517"/>
        <dbReference type="ChEBI" id="CHEBI:30616"/>
        <dbReference type="ChEBI" id="CHEBI:58369"/>
        <dbReference type="ChEBI" id="CHEBI:63528"/>
        <dbReference type="ChEBI" id="CHEBI:456216"/>
        <dbReference type="EC" id="2.7.4.9"/>
    </reaction>
</comment>
<comment type="similarity">
    <text evidence="1">Belongs to the thymidylate kinase family.</text>
</comment>
<gene>
    <name evidence="1" type="primary">tmk</name>
    <name type="ordered locus">CMS0188</name>
</gene>
<dbReference type="EC" id="2.7.4.9" evidence="1"/>
<dbReference type="EMBL" id="AM849034">
    <property type="protein sequence ID" value="CAQ00311.1"/>
    <property type="molecule type" value="Genomic_DNA"/>
</dbReference>
<dbReference type="RefSeq" id="WP_012297666.1">
    <property type="nucleotide sequence ID" value="NZ_MZMN01000003.1"/>
</dbReference>
<dbReference type="SMR" id="B0RAE3"/>
<dbReference type="STRING" id="31964.CMS0188"/>
<dbReference type="KEGG" id="cms:CMS0188"/>
<dbReference type="eggNOG" id="COG0125">
    <property type="taxonomic scope" value="Bacteria"/>
</dbReference>
<dbReference type="HOGENOM" id="CLU_049131_0_2_11"/>
<dbReference type="OrthoDB" id="9774907at2"/>
<dbReference type="Proteomes" id="UP000001318">
    <property type="component" value="Chromosome"/>
</dbReference>
<dbReference type="GO" id="GO:0005829">
    <property type="term" value="C:cytosol"/>
    <property type="evidence" value="ECO:0007669"/>
    <property type="project" value="TreeGrafter"/>
</dbReference>
<dbReference type="GO" id="GO:0005524">
    <property type="term" value="F:ATP binding"/>
    <property type="evidence" value="ECO:0007669"/>
    <property type="project" value="UniProtKB-UniRule"/>
</dbReference>
<dbReference type="GO" id="GO:0004798">
    <property type="term" value="F:dTMP kinase activity"/>
    <property type="evidence" value="ECO:0007669"/>
    <property type="project" value="UniProtKB-UniRule"/>
</dbReference>
<dbReference type="GO" id="GO:0006233">
    <property type="term" value="P:dTDP biosynthetic process"/>
    <property type="evidence" value="ECO:0007669"/>
    <property type="project" value="InterPro"/>
</dbReference>
<dbReference type="GO" id="GO:0006235">
    <property type="term" value="P:dTTP biosynthetic process"/>
    <property type="evidence" value="ECO:0007669"/>
    <property type="project" value="UniProtKB-UniRule"/>
</dbReference>
<dbReference type="GO" id="GO:0006227">
    <property type="term" value="P:dUDP biosynthetic process"/>
    <property type="evidence" value="ECO:0007669"/>
    <property type="project" value="TreeGrafter"/>
</dbReference>
<dbReference type="CDD" id="cd01672">
    <property type="entry name" value="TMPK"/>
    <property type="match status" value="1"/>
</dbReference>
<dbReference type="FunFam" id="3.40.50.300:FF:000225">
    <property type="entry name" value="Thymidylate kinase"/>
    <property type="match status" value="1"/>
</dbReference>
<dbReference type="Gene3D" id="3.40.50.300">
    <property type="entry name" value="P-loop containing nucleotide triphosphate hydrolases"/>
    <property type="match status" value="1"/>
</dbReference>
<dbReference type="HAMAP" id="MF_00165">
    <property type="entry name" value="Thymidylate_kinase"/>
    <property type="match status" value="1"/>
</dbReference>
<dbReference type="InterPro" id="IPR027417">
    <property type="entry name" value="P-loop_NTPase"/>
</dbReference>
<dbReference type="InterPro" id="IPR039430">
    <property type="entry name" value="Thymidylate_kin-like_dom"/>
</dbReference>
<dbReference type="InterPro" id="IPR018094">
    <property type="entry name" value="Thymidylate_kinase"/>
</dbReference>
<dbReference type="NCBIfam" id="TIGR00041">
    <property type="entry name" value="DTMP_kinase"/>
    <property type="match status" value="1"/>
</dbReference>
<dbReference type="PANTHER" id="PTHR10344">
    <property type="entry name" value="THYMIDYLATE KINASE"/>
    <property type="match status" value="1"/>
</dbReference>
<dbReference type="PANTHER" id="PTHR10344:SF4">
    <property type="entry name" value="UMP-CMP KINASE 2, MITOCHONDRIAL"/>
    <property type="match status" value="1"/>
</dbReference>
<dbReference type="Pfam" id="PF02223">
    <property type="entry name" value="Thymidylate_kin"/>
    <property type="match status" value="1"/>
</dbReference>
<dbReference type="SUPFAM" id="SSF52540">
    <property type="entry name" value="P-loop containing nucleoside triphosphate hydrolases"/>
    <property type="match status" value="1"/>
</dbReference>
<accession>B0RAE3</accession>
<organism>
    <name type="scientific">Clavibacter sepedonicus</name>
    <name type="common">Clavibacter michiganensis subsp. sepedonicus</name>
    <dbReference type="NCBI Taxonomy" id="31964"/>
    <lineage>
        <taxon>Bacteria</taxon>
        <taxon>Bacillati</taxon>
        <taxon>Actinomycetota</taxon>
        <taxon>Actinomycetes</taxon>
        <taxon>Micrococcales</taxon>
        <taxon>Microbacteriaceae</taxon>
        <taxon>Clavibacter</taxon>
    </lineage>
</organism>
<name>KTHY_CLASE</name>
<reference key="1">
    <citation type="journal article" date="2008" name="J. Bacteriol.">
        <title>Genome of the actinomycete plant pathogen Clavibacter michiganensis subsp. sepedonicus suggests recent niche adaptation.</title>
        <authorList>
            <person name="Bentley S.D."/>
            <person name="Corton C."/>
            <person name="Brown S.E."/>
            <person name="Barron A."/>
            <person name="Clark L."/>
            <person name="Doggett J."/>
            <person name="Harris B."/>
            <person name="Ormond D."/>
            <person name="Quail M.A."/>
            <person name="May G."/>
            <person name="Francis D."/>
            <person name="Knudson D."/>
            <person name="Parkhill J."/>
            <person name="Ishimaru C.A."/>
        </authorList>
    </citation>
    <scope>NUCLEOTIDE SEQUENCE [LARGE SCALE GENOMIC DNA]</scope>
    <source>
        <strain>ATCC 33113 / DSM 20744 / JCM 9667 / LMG 2889 / ICMP 2535 / C-1</strain>
    </source>
</reference>
<sequence>MTGVFITLEGGDGVGKSTQSALLREWLEEQGHEVVVTREPGGSDLGQEIREIVLHRRGHIAPRAEALLYAADRAHHVETVVRPALERGAVVLQDRYLDSSVAYQGAGRVLDAAEIRDLSLWAAQGLLPDLTVLLDLDQAAARIRLDAARTRFDRLEAERADFHERVRQAFLGLAAAEPERFLVVDAGWPREVIAAEIRARAHVLIAAGASA</sequence>
<proteinExistence type="inferred from homology"/>
<evidence type="ECO:0000255" key="1">
    <source>
        <dbReference type="HAMAP-Rule" id="MF_00165"/>
    </source>
</evidence>
<feature type="chain" id="PRO_1000076960" description="Thymidylate kinase">
    <location>
        <begin position="1"/>
        <end position="211"/>
    </location>
</feature>
<feature type="binding site" evidence="1">
    <location>
        <begin position="10"/>
        <end position="17"/>
    </location>
    <ligand>
        <name>ATP</name>
        <dbReference type="ChEBI" id="CHEBI:30616"/>
    </ligand>
</feature>